<keyword id="KW-0067">ATP-binding</keyword>
<keyword id="KW-0963">Cytoplasm</keyword>
<keyword id="KW-0227">DNA damage</keyword>
<keyword id="KW-0233">DNA recombination</keyword>
<keyword id="KW-0234">DNA repair</keyword>
<keyword id="KW-0238">DNA-binding</keyword>
<keyword id="KW-0378">Hydrolase</keyword>
<keyword id="KW-0547">Nucleotide-binding</keyword>
<protein>
    <recommendedName>
        <fullName evidence="1">Holliday junction branch migration complex subunit RuvB</fullName>
        <ecNumber evidence="1">3.6.4.-</ecNumber>
    </recommendedName>
</protein>
<feature type="chain" id="PRO_1000089699" description="Holliday junction branch migration complex subunit RuvB">
    <location>
        <begin position="1"/>
        <end position="334"/>
    </location>
</feature>
<feature type="region of interest" description="Large ATPase domain (RuvB-L)" evidence="1">
    <location>
        <begin position="4"/>
        <end position="184"/>
    </location>
</feature>
<feature type="region of interest" description="Small ATPAse domain (RuvB-S)" evidence="1">
    <location>
        <begin position="185"/>
        <end position="255"/>
    </location>
</feature>
<feature type="region of interest" description="Head domain (RuvB-H)" evidence="1">
    <location>
        <begin position="258"/>
        <end position="334"/>
    </location>
</feature>
<feature type="binding site" evidence="1">
    <location>
        <position position="23"/>
    </location>
    <ligand>
        <name>ATP</name>
        <dbReference type="ChEBI" id="CHEBI:30616"/>
    </ligand>
</feature>
<feature type="binding site" evidence="1">
    <location>
        <position position="24"/>
    </location>
    <ligand>
        <name>ATP</name>
        <dbReference type="ChEBI" id="CHEBI:30616"/>
    </ligand>
</feature>
<feature type="binding site" evidence="1">
    <location>
        <position position="65"/>
    </location>
    <ligand>
        <name>ATP</name>
        <dbReference type="ChEBI" id="CHEBI:30616"/>
    </ligand>
</feature>
<feature type="binding site" evidence="1">
    <location>
        <position position="68"/>
    </location>
    <ligand>
        <name>ATP</name>
        <dbReference type="ChEBI" id="CHEBI:30616"/>
    </ligand>
</feature>
<feature type="binding site" evidence="1">
    <location>
        <position position="69"/>
    </location>
    <ligand>
        <name>ATP</name>
        <dbReference type="ChEBI" id="CHEBI:30616"/>
    </ligand>
</feature>
<feature type="binding site" evidence="1">
    <location>
        <position position="69"/>
    </location>
    <ligand>
        <name>Mg(2+)</name>
        <dbReference type="ChEBI" id="CHEBI:18420"/>
    </ligand>
</feature>
<feature type="binding site" evidence="1">
    <location>
        <position position="70"/>
    </location>
    <ligand>
        <name>ATP</name>
        <dbReference type="ChEBI" id="CHEBI:30616"/>
    </ligand>
</feature>
<feature type="binding site" evidence="1">
    <location>
        <begin position="131"/>
        <end position="133"/>
    </location>
    <ligand>
        <name>ATP</name>
        <dbReference type="ChEBI" id="CHEBI:30616"/>
    </ligand>
</feature>
<feature type="binding site" evidence="1">
    <location>
        <position position="174"/>
    </location>
    <ligand>
        <name>ATP</name>
        <dbReference type="ChEBI" id="CHEBI:30616"/>
    </ligand>
</feature>
<feature type="binding site" evidence="1">
    <location>
        <position position="184"/>
    </location>
    <ligand>
        <name>ATP</name>
        <dbReference type="ChEBI" id="CHEBI:30616"/>
    </ligand>
</feature>
<feature type="binding site" evidence="1">
    <location>
        <position position="221"/>
    </location>
    <ligand>
        <name>ATP</name>
        <dbReference type="ChEBI" id="CHEBI:30616"/>
    </ligand>
</feature>
<feature type="binding site" evidence="1">
    <location>
        <position position="294"/>
    </location>
    <ligand>
        <name>DNA</name>
        <dbReference type="ChEBI" id="CHEBI:16991"/>
    </ligand>
</feature>
<feature type="binding site" evidence="1">
    <location>
        <position position="313"/>
    </location>
    <ligand>
        <name>DNA</name>
        <dbReference type="ChEBI" id="CHEBI:16991"/>
    </ligand>
</feature>
<feature type="binding site" evidence="1">
    <location>
        <position position="318"/>
    </location>
    <ligand>
        <name>DNA</name>
        <dbReference type="ChEBI" id="CHEBI:16991"/>
    </ligand>
</feature>
<reference key="1">
    <citation type="journal article" date="2010" name="J. Bacteriol.">
        <title>Genome sequence of the deep-rooted Yersinia pestis strain Angola reveals new insights into the evolution and pangenome of the plague bacterium.</title>
        <authorList>
            <person name="Eppinger M."/>
            <person name="Worsham P.L."/>
            <person name="Nikolich M.P."/>
            <person name="Riley D.R."/>
            <person name="Sebastian Y."/>
            <person name="Mou S."/>
            <person name="Achtman M."/>
            <person name="Lindler L.E."/>
            <person name="Ravel J."/>
        </authorList>
    </citation>
    <scope>NUCLEOTIDE SEQUENCE [LARGE SCALE GENOMIC DNA]</scope>
    <source>
        <strain>Angola</strain>
    </source>
</reference>
<dbReference type="EC" id="3.6.4.-" evidence="1"/>
<dbReference type="EMBL" id="CP000901">
    <property type="protein sequence ID" value="ABX87765.1"/>
    <property type="molecule type" value="Genomic_DNA"/>
</dbReference>
<dbReference type="RefSeq" id="WP_012229685.1">
    <property type="nucleotide sequence ID" value="NC_010159.1"/>
</dbReference>
<dbReference type="SMR" id="A9QYX2"/>
<dbReference type="KEGG" id="ypg:YpAngola_A2420"/>
<dbReference type="PATRIC" id="fig|349746.12.peg.3437"/>
<dbReference type="GO" id="GO:0005737">
    <property type="term" value="C:cytoplasm"/>
    <property type="evidence" value="ECO:0007669"/>
    <property type="project" value="UniProtKB-SubCell"/>
</dbReference>
<dbReference type="GO" id="GO:0048476">
    <property type="term" value="C:Holliday junction resolvase complex"/>
    <property type="evidence" value="ECO:0007669"/>
    <property type="project" value="UniProtKB-UniRule"/>
</dbReference>
<dbReference type="GO" id="GO:0005524">
    <property type="term" value="F:ATP binding"/>
    <property type="evidence" value="ECO:0007669"/>
    <property type="project" value="UniProtKB-UniRule"/>
</dbReference>
<dbReference type="GO" id="GO:0016887">
    <property type="term" value="F:ATP hydrolysis activity"/>
    <property type="evidence" value="ECO:0007669"/>
    <property type="project" value="InterPro"/>
</dbReference>
<dbReference type="GO" id="GO:0000400">
    <property type="term" value="F:four-way junction DNA binding"/>
    <property type="evidence" value="ECO:0007669"/>
    <property type="project" value="UniProtKB-UniRule"/>
</dbReference>
<dbReference type="GO" id="GO:0009378">
    <property type="term" value="F:four-way junction helicase activity"/>
    <property type="evidence" value="ECO:0007669"/>
    <property type="project" value="InterPro"/>
</dbReference>
<dbReference type="GO" id="GO:0006310">
    <property type="term" value="P:DNA recombination"/>
    <property type="evidence" value="ECO:0007669"/>
    <property type="project" value="UniProtKB-UniRule"/>
</dbReference>
<dbReference type="GO" id="GO:0006281">
    <property type="term" value="P:DNA repair"/>
    <property type="evidence" value="ECO:0007669"/>
    <property type="project" value="UniProtKB-UniRule"/>
</dbReference>
<dbReference type="CDD" id="cd00009">
    <property type="entry name" value="AAA"/>
    <property type="match status" value="1"/>
</dbReference>
<dbReference type="FunFam" id="1.10.10.10:FF:000086">
    <property type="entry name" value="Holliday junction ATP-dependent DNA helicase RuvB"/>
    <property type="match status" value="1"/>
</dbReference>
<dbReference type="FunFam" id="1.10.8.60:FF:000023">
    <property type="entry name" value="Holliday junction ATP-dependent DNA helicase RuvB"/>
    <property type="match status" value="1"/>
</dbReference>
<dbReference type="FunFam" id="3.40.50.300:FF:000073">
    <property type="entry name" value="Holliday junction ATP-dependent DNA helicase RuvB"/>
    <property type="match status" value="1"/>
</dbReference>
<dbReference type="Gene3D" id="1.10.8.60">
    <property type="match status" value="1"/>
</dbReference>
<dbReference type="Gene3D" id="3.40.50.300">
    <property type="entry name" value="P-loop containing nucleotide triphosphate hydrolases"/>
    <property type="match status" value="1"/>
</dbReference>
<dbReference type="Gene3D" id="1.10.10.10">
    <property type="entry name" value="Winged helix-like DNA-binding domain superfamily/Winged helix DNA-binding domain"/>
    <property type="match status" value="1"/>
</dbReference>
<dbReference type="HAMAP" id="MF_00016">
    <property type="entry name" value="DNA_HJ_migration_RuvB"/>
    <property type="match status" value="1"/>
</dbReference>
<dbReference type="InterPro" id="IPR003593">
    <property type="entry name" value="AAA+_ATPase"/>
</dbReference>
<dbReference type="InterPro" id="IPR041445">
    <property type="entry name" value="AAA_lid_4"/>
</dbReference>
<dbReference type="InterPro" id="IPR004605">
    <property type="entry name" value="DNA_helicase_Holl-junc_RuvB"/>
</dbReference>
<dbReference type="InterPro" id="IPR027417">
    <property type="entry name" value="P-loop_NTPase"/>
</dbReference>
<dbReference type="InterPro" id="IPR008824">
    <property type="entry name" value="RuvB-like_N"/>
</dbReference>
<dbReference type="InterPro" id="IPR008823">
    <property type="entry name" value="RuvB_C"/>
</dbReference>
<dbReference type="InterPro" id="IPR036388">
    <property type="entry name" value="WH-like_DNA-bd_sf"/>
</dbReference>
<dbReference type="InterPro" id="IPR036390">
    <property type="entry name" value="WH_DNA-bd_sf"/>
</dbReference>
<dbReference type="NCBIfam" id="NF000868">
    <property type="entry name" value="PRK00080.1"/>
    <property type="match status" value="1"/>
</dbReference>
<dbReference type="NCBIfam" id="TIGR00635">
    <property type="entry name" value="ruvB"/>
    <property type="match status" value="1"/>
</dbReference>
<dbReference type="PANTHER" id="PTHR42848">
    <property type="match status" value="1"/>
</dbReference>
<dbReference type="PANTHER" id="PTHR42848:SF1">
    <property type="entry name" value="HOLLIDAY JUNCTION BRANCH MIGRATION COMPLEX SUBUNIT RUVB"/>
    <property type="match status" value="1"/>
</dbReference>
<dbReference type="Pfam" id="PF17864">
    <property type="entry name" value="AAA_lid_4"/>
    <property type="match status" value="1"/>
</dbReference>
<dbReference type="Pfam" id="PF05491">
    <property type="entry name" value="RuvB_C"/>
    <property type="match status" value="1"/>
</dbReference>
<dbReference type="Pfam" id="PF05496">
    <property type="entry name" value="RuvB_N"/>
    <property type="match status" value="1"/>
</dbReference>
<dbReference type="SMART" id="SM00382">
    <property type="entry name" value="AAA"/>
    <property type="match status" value="1"/>
</dbReference>
<dbReference type="SUPFAM" id="SSF52540">
    <property type="entry name" value="P-loop containing nucleoside triphosphate hydrolases"/>
    <property type="match status" value="1"/>
</dbReference>
<dbReference type="SUPFAM" id="SSF46785">
    <property type="entry name" value="Winged helix' DNA-binding domain"/>
    <property type="match status" value="1"/>
</dbReference>
<sequence length="334" mass="37019">MIEADRLISAAVINDEESIDRAIRPKLLTEYVGQPHVREQMEIFIQAAKQRGDALDHVLIFGPPGLGKTTLANIIANEMGVNLRTTSGPVLEKAGDLAAMLTNLEPHDVLFIDEIHRLSPVVEEILYPAMEDYQLDIMIGEGPAARSIKLDLPPFTLIGATTRAGSLTSPLRDRFGIVQRLEFYPVADLEHIVSRSAKCLGLELTPEGAHQLARRSRGTPRITNRLLRRVRDFAEVRADGAINGEVAMKALDMLNVDAEGFDFMDRKLLLAVIDKFMGGPVGLDNLAAAIGEERETIEDVLEPYLIQQGFIQRTPRGRIATNHAYKHFGITREE</sequence>
<accession>A9QYX2</accession>
<proteinExistence type="inferred from homology"/>
<gene>
    <name evidence="1" type="primary">ruvB</name>
    <name type="ordered locus">YpAngola_A2420</name>
</gene>
<comment type="function">
    <text evidence="1">The RuvA-RuvB-RuvC complex processes Holliday junction (HJ) DNA during genetic recombination and DNA repair, while the RuvA-RuvB complex plays an important role in the rescue of blocked DNA replication forks via replication fork reversal (RFR). RuvA specifically binds to HJ cruciform DNA, conferring on it an open structure. The RuvB hexamer acts as an ATP-dependent pump, pulling dsDNA into and through the RuvAB complex. RuvB forms 2 homohexamers on either side of HJ DNA bound by 1 or 2 RuvA tetramers; 4 subunits per hexamer contact DNA at a time. Coordinated motions by a converter formed by DNA-disengaged RuvB subunits stimulates ATP hydrolysis and nucleotide exchange. Immobilization of the converter enables RuvB to convert the ATP-contained energy into a lever motion, pulling 2 nucleotides of DNA out of the RuvA tetramer per ATP hydrolyzed, thus driving DNA branch migration. The RuvB motors rotate together with the DNA substrate, which together with the progressing nucleotide cycle form the mechanistic basis for DNA recombination by continuous HJ branch migration. Branch migration allows RuvC to scan DNA until it finds its consensus sequence, where it cleaves and resolves cruciform DNA.</text>
</comment>
<comment type="catalytic activity">
    <reaction evidence="1">
        <text>ATP + H2O = ADP + phosphate + H(+)</text>
        <dbReference type="Rhea" id="RHEA:13065"/>
        <dbReference type="ChEBI" id="CHEBI:15377"/>
        <dbReference type="ChEBI" id="CHEBI:15378"/>
        <dbReference type="ChEBI" id="CHEBI:30616"/>
        <dbReference type="ChEBI" id="CHEBI:43474"/>
        <dbReference type="ChEBI" id="CHEBI:456216"/>
    </reaction>
</comment>
<comment type="subunit">
    <text evidence="1">Homohexamer. Forms an RuvA(8)-RuvB(12)-Holliday junction (HJ) complex. HJ DNA is sandwiched between 2 RuvA tetramers; dsDNA enters through RuvA and exits via RuvB. An RuvB hexamer assembles on each DNA strand where it exits the tetramer. Each RuvB hexamer is contacted by two RuvA subunits (via domain III) on 2 adjacent RuvB subunits; this complex drives branch migration. In the full resolvosome a probable DNA-RuvA(4)-RuvB(12)-RuvC(2) complex forms which resolves the HJ.</text>
</comment>
<comment type="subcellular location">
    <subcellularLocation>
        <location evidence="1">Cytoplasm</location>
    </subcellularLocation>
</comment>
<comment type="domain">
    <text evidence="1">Has 3 domains, the large (RuvB-L) and small ATPase (RuvB-S) domains and the C-terminal head (RuvB-H) domain. The head domain binds DNA, while the ATPase domains jointly bind ATP, ADP or are empty depending on the state of the subunit in the translocation cycle. During a single DNA translocation step the structure of each domain remains the same, but their relative positions change.</text>
</comment>
<comment type="similarity">
    <text evidence="1">Belongs to the RuvB family.</text>
</comment>
<evidence type="ECO:0000255" key="1">
    <source>
        <dbReference type="HAMAP-Rule" id="MF_00016"/>
    </source>
</evidence>
<name>RUVB_YERPG</name>
<organism>
    <name type="scientific">Yersinia pestis bv. Antiqua (strain Angola)</name>
    <dbReference type="NCBI Taxonomy" id="349746"/>
    <lineage>
        <taxon>Bacteria</taxon>
        <taxon>Pseudomonadati</taxon>
        <taxon>Pseudomonadota</taxon>
        <taxon>Gammaproteobacteria</taxon>
        <taxon>Enterobacterales</taxon>
        <taxon>Yersiniaceae</taxon>
        <taxon>Yersinia</taxon>
    </lineage>
</organism>